<comment type="function">
    <text evidence="1">Catalyzes the NADPH-dependent reduction of L-glutamate 5-phosphate into L-glutamate 5-semialdehyde and phosphate. The product spontaneously undergoes cyclization to form 1-pyrroline-5-carboxylate.</text>
</comment>
<comment type="catalytic activity">
    <reaction evidence="1">
        <text>L-glutamate 5-semialdehyde + phosphate + NADP(+) = L-glutamyl 5-phosphate + NADPH + H(+)</text>
        <dbReference type="Rhea" id="RHEA:19541"/>
        <dbReference type="ChEBI" id="CHEBI:15378"/>
        <dbReference type="ChEBI" id="CHEBI:43474"/>
        <dbReference type="ChEBI" id="CHEBI:57783"/>
        <dbReference type="ChEBI" id="CHEBI:58066"/>
        <dbReference type="ChEBI" id="CHEBI:58274"/>
        <dbReference type="ChEBI" id="CHEBI:58349"/>
        <dbReference type="EC" id="1.2.1.41"/>
    </reaction>
</comment>
<comment type="pathway">
    <text evidence="1">Amino-acid biosynthesis; L-proline biosynthesis; L-glutamate 5-semialdehyde from L-glutamate: step 2/2.</text>
</comment>
<comment type="subcellular location">
    <subcellularLocation>
        <location evidence="1">Cytoplasm</location>
    </subcellularLocation>
</comment>
<comment type="similarity">
    <text evidence="1">Belongs to the gamma-glutamyl phosphate reductase family.</text>
</comment>
<feature type="chain" id="PRO_0000189789" description="Gamma-glutamyl phosphate reductase">
    <location>
        <begin position="1"/>
        <end position="420"/>
    </location>
</feature>
<sequence length="420" mass="45225">MVSRQEQFEQVQAVKKSINTASEEVKNQALLAMADHLVAATEEILAANALDMAAAKGKISDVMLDRLYLDADRIEAMARGIREVVALPDPIGEVLETSQLENGLVITKKRVAMGVIGIIYESRPNVTSDAAALTLKSGNAVVLRSGKDAYQTTHAIVTALKKGLETTTIHPNVIQLVEDTSRESSYAMMKAKGYLDLLIPRGGAGLINAVVENAIVPVIETGTGIVHVYVDKDADEDKALSIINNAKTSRPSVCNAMEVLLVHENKAASILPRLDQMLVAERKEAGLEPIQFRLDSKASQFVSGQAAETQDFDTEFLDYVLAVKVVSSLEEAVAHIESHSTHHSDAIVTENAEAAAYFTDQVDSAAVYVNASTRFTDGGQFGLGCEMGISTQKLHARGPMGLKELTSYKYVVAGDGQIRE</sequence>
<protein>
    <recommendedName>
        <fullName evidence="1">Gamma-glutamyl phosphate reductase</fullName>
        <shortName evidence="1">GPR</shortName>
        <ecNumber evidence="1">1.2.1.41</ecNumber>
    </recommendedName>
    <alternativeName>
        <fullName evidence="1">Glutamate-5-semialdehyde dehydrogenase</fullName>
    </alternativeName>
    <alternativeName>
        <fullName evidence="1">Glutamyl-gamma-semialdehyde dehydrogenase</fullName>
        <shortName evidence="1">GSA dehydrogenase</shortName>
    </alternativeName>
</protein>
<proteinExistence type="inferred from homology"/>
<organism>
    <name type="scientific">Streptococcus pneumoniae (strain ATCC BAA-255 / R6)</name>
    <dbReference type="NCBI Taxonomy" id="171101"/>
    <lineage>
        <taxon>Bacteria</taxon>
        <taxon>Bacillati</taxon>
        <taxon>Bacillota</taxon>
        <taxon>Bacilli</taxon>
        <taxon>Lactobacillales</taxon>
        <taxon>Streptococcaceae</taxon>
        <taxon>Streptococcus</taxon>
    </lineage>
</organism>
<dbReference type="EC" id="1.2.1.41" evidence="1"/>
<dbReference type="EMBL" id="AE007317">
    <property type="protein sequence ID" value="AAK99637.1"/>
    <property type="molecule type" value="Genomic_DNA"/>
</dbReference>
<dbReference type="PIR" id="A97976">
    <property type="entry name" value="A97976"/>
</dbReference>
<dbReference type="RefSeq" id="NP_358427.1">
    <property type="nucleotide sequence ID" value="NC_003098.1"/>
</dbReference>
<dbReference type="RefSeq" id="WP_000254686.1">
    <property type="nucleotide sequence ID" value="NC_003098.1"/>
</dbReference>
<dbReference type="SMR" id="Q8DQ60"/>
<dbReference type="STRING" id="171101.spr0833"/>
<dbReference type="KEGG" id="spr:spr0833"/>
<dbReference type="PATRIC" id="fig|171101.6.peg.922"/>
<dbReference type="eggNOG" id="COG0014">
    <property type="taxonomic scope" value="Bacteria"/>
</dbReference>
<dbReference type="HOGENOM" id="CLU_030231_0_0_9"/>
<dbReference type="UniPathway" id="UPA00098">
    <property type="reaction ID" value="UER00360"/>
</dbReference>
<dbReference type="Proteomes" id="UP000000586">
    <property type="component" value="Chromosome"/>
</dbReference>
<dbReference type="GO" id="GO:0005737">
    <property type="term" value="C:cytoplasm"/>
    <property type="evidence" value="ECO:0007669"/>
    <property type="project" value="UniProtKB-SubCell"/>
</dbReference>
<dbReference type="GO" id="GO:0004350">
    <property type="term" value="F:glutamate-5-semialdehyde dehydrogenase activity"/>
    <property type="evidence" value="ECO:0000318"/>
    <property type="project" value="GO_Central"/>
</dbReference>
<dbReference type="GO" id="GO:0050661">
    <property type="term" value="F:NADP binding"/>
    <property type="evidence" value="ECO:0007669"/>
    <property type="project" value="InterPro"/>
</dbReference>
<dbReference type="GO" id="GO:0055129">
    <property type="term" value="P:L-proline biosynthetic process"/>
    <property type="evidence" value="ECO:0007669"/>
    <property type="project" value="UniProtKB-UniRule"/>
</dbReference>
<dbReference type="CDD" id="cd07079">
    <property type="entry name" value="ALDH_F18-19_ProA-GPR"/>
    <property type="match status" value="1"/>
</dbReference>
<dbReference type="FunFam" id="3.40.309.10:FF:000006">
    <property type="entry name" value="Gamma-glutamyl phosphate reductase"/>
    <property type="match status" value="1"/>
</dbReference>
<dbReference type="Gene3D" id="3.40.605.10">
    <property type="entry name" value="Aldehyde Dehydrogenase, Chain A, domain 1"/>
    <property type="match status" value="1"/>
</dbReference>
<dbReference type="Gene3D" id="3.40.309.10">
    <property type="entry name" value="Aldehyde Dehydrogenase, Chain A, domain 2"/>
    <property type="match status" value="1"/>
</dbReference>
<dbReference type="HAMAP" id="MF_00412">
    <property type="entry name" value="ProA"/>
    <property type="match status" value="1"/>
</dbReference>
<dbReference type="InterPro" id="IPR016161">
    <property type="entry name" value="Ald_DH/histidinol_DH"/>
</dbReference>
<dbReference type="InterPro" id="IPR016163">
    <property type="entry name" value="Ald_DH_C"/>
</dbReference>
<dbReference type="InterPro" id="IPR016162">
    <property type="entry name" value="Ald_DH_N"/>
</dbReference>
<dbReference type="InterPro" id="IPR015590">
    <property type="entry name" value="Aldehyde_DH_dom"/>
</dbReference>
<dbReference type="InterPro" id="IPR020593">
    <property type="entry name" value="G-glutamylP_reductase_CS"/>
</dbReference>
<dbReference type="InterPro" id="IPR012134">
    <property type="entry name" value="Glu-5-SA_DH"/>
</dbReference>
<dbReference type="InterPro" id="IPR000965">
    <property type="entry name" value="GPR_dom"/>
</dbReference>
<dbReference type="NCBIfam" id="NF001221">
    <property type="entry name" value="PRK00197.1"/>
    <property type="match status" value="1"/>
</dbReference>
<dbReference type="NCBIfam" id="TIGR00407">
    <property type="entry name" value="proA"/>
    <property type="match status" value="1"/>
</dbReference>
<dbReference type="PANTHER" id="PTHR11063:SF8">
    <property type="entry name" value="DELTA-1-PYRROLINE-5-CARBOXYLATE SYNTHASE"/>
    <property type="match status" value="1"/>
</dbReference>
<dbReference type="PANTHER" id="PTHR11063">
    <property type="entry name" value="GLUTAMATE SEMIALDEHYDE DEHYDROGENASE"/>
    <property type="match status" value="1"/>
</dbReference>
<dbReference type="Pfam" id="PF00171">
    <property type="entry name" value="Aldedh"/>
    <property type="match status" value="1"/>
</dbReference>
<dbReference type="PIRSF" id="PIRSF000151">
    <property type="entry name" value="GPR"/>
    <property type="match status" value="1"/>
</dbReference>
<dbReference type="SUPFAM" id="SSF53720">
    <property type="entry name" value="ALDH-like"/>
    <property type="match status" value="1"/>
</dbReference>
<dbReference type="PROSITE" id="PS01223">
    <property type="entry name" value="PROA"/>
    <property type="match status" value="1"/>
</dbReference>
<evidence type="ECO:0000255" key="1">
    <source>
        <dbReference type="HAMAP-Rule" id="MF_00412"/>
    </source>
</evidence>
<reference key="1">
    <citation type="journal article" date="2001" name="J. Bacteriol.">
        <title>Genome of the bacterium Streptococcus pneumoniae strain R6.</title>
        <authorList>
            <person name="Hoskins J."/>
            <person name="Alborn W.E. Jr."/>
            <person name="Arnold J."/>
            <person name="Blaszczak L.C."/>
            <person name="Burgett S."/>
            <person name="DeHoff B.S."/>
            <person name="Estrem S.T."/>
            <person name="Fritz L."/>
            <person name="Fu D.-J."/>
            <person name="Fuller W."/>
            <person name="Geringer C."/>
            <person name="Gilmour R."/>
            <person name="Glass J.S."/>
            <person name="Khoja H."/>
            <person name="Kraft A.R."/>
            <person name="Lagace R.E."/>
            <person name="LeBlanc D.J."/>
            <person name="Lee L.N."/>
            <person name="Lefkowitz E.J."/>
            <person name="Lu J."/>
            <person name="Matsushima P."/>
            <person name="McAhren S.M."/>
            <person name="McHenney M."/>
            <person name="McLeaster K."/>
            <person name="Mundy C.W."/>
            <person name="Nicas T.I."/>
            <person name="Norris F.H."/>
            <person name="O'Gara M."/>
            <person name="Peery R.B."/>
            <person name="Robertson G.T."/>
            <person name="Rockey P."/>
            <person name="Sun P.-M."/>
            <person name="Winkler M.E."/>
            <person name="Yang Y."/>
            <person name="Young-Bellido M."/>
            <person name="Zhao G."/>
            <person name="Zook C.A."/>
            <person name="Baltz R.H."/>
            <person name="Jaskunas S.R."/>
            <person name="Rosteck P.R. Jr."/>
            <person name="Skatrud P.L."/>
            <person name="Glass J.I."/>
        </authorList>
    </citation>
    <scope>NUCLEOTIDE SEQUENCE [LARGE SCALE GENOMIC DNA]</scope>
    <source>
        <strain>ATCC BAA-255 / R6</strain>
    </source>
</reference>
<gene>
    <name evidence="1" type="primary">proA</name>
    <name type="ordered locus">spr0833</name>
</gene>
<accession>Q8DQ60</accession>
<name>PROA_STRR6</name>
<keyword id="KW-0028">Amino-acid biosynthesis</keyword>
<keyword id="KW-0963">Cytoplasm</keyword>
<keyword id="KW-0521">NADP</keyword>
<keyword id="KW-0560">Oxidoreductase</keyword>
<keyword id="KW-0641">Proline biosynthesis</keyword>
<keyword id="KW-1185">Reference proteome</keyword>